<comment type="subcellular location">
    <subcellularLocation>
        <location evidence="1">Cell inner membrane</location>
        <topology evidence="1">Multi-pass membrane protein</topology>
    </subcellularLocation>
</comment>
<comment type="similarity">
    <text evidence="1">Belongs to the UPF0208 family.</text>
</comment>
<evidence type="ECO:0000255" key="1">
    <source>
        <dbReference type="HAMAP-Rule" id="MF_01101"/>
    </source>
</evidence>
<sequence length="151" mass="17201">MSTPDNRSVNFFSLFRRGQHYAKTWPMEKRLAPVFVENRVIRMTRYAIRFMPPVAVFTLCWQIALGGQLGPAVATALFALSLPMQGLWWLGKRSVTPLPPSILNWFYEVRGKLQEAGQALAPVEGKPDYQALADTLKRAFKQLDKTFLDDL</sequence>
<organism>
    <name type="scientific">Salmonella paratyphi B (strain ATCC BAA-1250 / SPB7)</name>
    <dbReference type="NCBI Taxonomy" id="1016998"/>
    <lineage>
        <taxon>Bacteria</taxon>
        <taxon>Pseudomonadati</taxon>
        <taxon>Pseudomonadota</taxon>
        <taxon>Gammaproteobacteria</taxon>
        <taxon>Enterobacterales</taxon>
        <taxon>Enterobacteriaceae</taxon>
        <taxon>Salmonella</taxon>
    </lineage>
</organism>
<dbReference type="EMBL" id="CP000886">
    <property type="protein sequence ID" value="ABX66065.1"/>
    <property type="molecule type" value="Genomic_DNA"/>
</dbReference>
<dbReference type="RefSeq" id="WP_000106617.1">
    <property type="nucleotide sequence ID" value="NC_010102.1"/>
</dbReference>
<dbReference type="KEGG" id="spq:SPAB_00639"/>
<dbReference type="PATRIC" id="fig|1016998.12.peg.601"/>
<dbReference type="HOGENOM" id="CLU_128746_0_0_6"/>
<dbReference type="BioCyc" id="SENT1016998:SPAB_RS02655-MONOMER"/>
<dbReference type="Proteomes" id="UP000008556">
    <property type="component" value="Chromosome"/>
</dbReference>
<dbReference type="GO" id="GO:0005886">
    <property type="term" value="C:plasma membrane"/>
    <property type="evidence" value="ECO:0007669"/>
    <property type="project" value="UniProtKB-SubCell"/>
</dbReference>
<dbReference type="HAMAP" id="MF_01101">
    <property type="entry name" value="UPF0208"/>
    <property type="match status" value="1"/>
</dbReference>
<dbReference type="InterPro" id="IPR007334">
    <property type="entry name" value="UPF0208"/>
</dbReference>
<dbReference type="NCBIfam" id="NF002493">
    <property type="entry name" value="PRK01816.1"/>
    <property type="match status" value="1"/>
</dbReference>
<dbReference type="Pfam" id="PF04217">
    <property type="entry name" value="DUF412"/>
    <property type="match status" value="1"/>
</dbReference>
<protein>
    <recommendedName>
        <fullName evidence="1">UPF0208 membrane protein YfbV</fullName>
    </recommendedName>
</protein>
<keyword id="KW-0997">Cell inner membrane</keyword>
<keyword id="KW-1003">Cell membrane</keyword>
<keyword id="KW-0472">Membrane</keyword>
<keyword id="KW-0812">Transmembrane</keyword>
<keyword id="KW-1133">Transmembrane helix</keyword>
<proteinExistence type="inferred from homology"/>
<name>YFBV_SALPB</name>
<reference key="1">
    <citation type="submission" date="2007-11" db="EMBL/GenBank/DDBJ databases">
        <authorList>
            <consortium name="The Salmonella enterica serovar Paratyphi B Genome Sequencing Project"/>
            <person name="McClelland M."/>
            <person name="Sanderson E.K."/>
            <person name="Porwollik S."/>
            <person name="Spieth J."/>
            <person name="Clifton W.S."/>
            <person name="Fulton R."/>
            <person name="Cordes M."/>
            <person name="Wollam A."/>
            <person name="Shah N."/>
            <person name="Pepin K."/>
            <person name="Bhonagiri V."/>
            <person name="Nash W."/>
            <person name="Johnson M."/>
            <person name="Thiruvilangam P."/>
            <person name="Wilson R."/>
        </authorList>
    </citation>
    <scope>NUCLEOTIDE SEQUENCE [LARGE SCALE GENOMIC DNA]</scope>
    <source>
        <strain>ATCC BAA-1250 / SPB7</strain>
    </source>
</reference>
<accession>A9N4B4</accession>
<gene>
    <name evidence="1" type="primary">yfbV</name>
    <name type="ordered locus">SPAB_00639</name>
</gene>
<feature type="chain" id="PRO_1000084792" description="UPF0208 membrane protein YfbV">
    <location>
        <begin position="1"/>
        <end position="151"/>
    </location>
</feature>
<feature type="transmembrane region" description="Helical" evidence="1">
    <location>
        <begin position="46"/>
        <end position="65"/>
    </location>
</feature>
<feature type="transmembrane region" description="Helical" evidence="1">
    <location>
        <begin position="69"/>
        <end position="91"/>
    </location>
</feature>